<name>PIMT_DECAR</name>
<gene>
    <name evidence="1" type="primary">pcm</name>
    <name type="ordered locus">Daro_2523</name>
</gene>
<comment type="function">
    <text evidence="1">Catalyzes the methyl esterification of L-isoaspartyl residues in peptides and proteins that result from spontaneous decomposition of normal L-aspartyl and L-asparaginyl residues. It plays a role in the repair and/or degradation of damaged proteins.</text>
</comment>
<comment type="catalytic activity">
    <reaction evidence="1">
        <text>[protein]-L-isoaspartate + S-adenosyl-L-methionine = [protein]-L-isoaspartate alpha-methyl ester + S-adenosyl-L-homocysteine</text>
        <dbReference type="Rhea" id="RHEA:12705"/>
        <dbReference type="Rhea" id="RHEA-COMP:12143"/>
        <dbReference type="Rhea" id="RHEA-COMP:12144"/>
        <dbReference type="ChEBI" id="CHEBI:57856"/>
        <dbReference type="ChEBI" id="CHEBI:59789"/>
        <dbReference type="ChEBI" id="CHEBI:90596"/>
        <dbReference type="ChEBI" id="CHEBI:90598"/>
        <dbReference type="EC" id="2.1.1.77"/>
    </reaction>
</comment>
<comment type="subcellular location">
    <subcellularLocation>
        <location evidence="1">Cytoplasm</location>
    </subcellularLocation>
</comment>
<comment type="similarity">
    <text evidence="1">Belongs to the methyltransferase superfamily. L-isoaspartyl/D-aspartyl protein methyltransferase family.</text>
</comment>
<dbReference type="EC" id="2.1.1.77" evidence="1"/>
<dbReference type="EMBL" id="CP000089">
    <property type="protein sequence ID" value="AAZ47256.1"/>
    <property type="molecule type" value="Genomic_DNA"/>
</dbReference>
<dbReference type="SMR" id="Q47D25"/>
<dbReference type="STRING" id="159087.Daro_2523"/>
<dbReference type="KEGG" id="dar:Daro_2523"/>
<dbReference type="eggNOG" id="COG2518">
    <property type="taxonomic scope" value="Bacteria"/>
</dbReference>
<dbReference type="HOGENOM" id="CLU_055432_2_0_4"/>
<dbReference type="GO" id="GO:0005737">
    <property type="term" value="C:cytoplasm"/>
    <property type="evidence" value="ECO:0007669"/>
    <property type="project" value="UniProtKB-SubCell"/>
</dbReference>
<dbReference type="GO" id="GO:0004719">
    <property type="term" value="F:protein-L-isoaspartate (D-aspartate) O-methyltransferase activity"/>
    <property type="evidence" value="ECO:0007669"/>
    <property type="project" value="UniProtKB-UniRule"/>
</dbReference>
<dbReference type="GO" id="GO:0032259">
    <property type="term" value="P:methylation"/>
    <property type="evidence" value="ECO:0007669"/>
    <property type="project" value="UniProtKB-KW"/>
</dbReference>
<dbReference type="GO" id="GO:0036211">
    <property type="term" value="P:protein modification process"/>
    <property type="evidence" value="ECO:0007669"/>
    <property type="project" value="UniProtKB-UniRule"/>
</dbReference>
<dbReference type="GO" id="GO:0030091">
    <property type="term" value="P:protein repair"/>
    <property type="evidence" value="ECO:0007669"/>
    <property type="project" value="UniProtKB-UniRule"/>
</dbReference>
<dbReference type="CDD" id="cd02440">
    <property type="entry name" value="AdoMet_MTases"/>
    <property type="match status" value="1"/>
</dbReference>
<dbReference type="FunFam" id="3.40.50.150:FF:000010">
    <property type="entry name" value="Protein-L-isoaspartate O-methyltransferase"/>
    <property type="match status" value="1"/>
</dbReference>
<dbReference type="Gene3D" id="3.40.50.150">
    <property type="entry name" value="Vaccinia Virus protein VP39"/>
    <property type="match status" value="1"/>
</dbReference>
<dbReference type="HAMAP" id="MF_00090">
    <property type="entry name" value="PIMT"/>
    <property type="match status" value="1"/>
</dbReference>
<dbReference type="InterPro" id="IPR000682">
    <property type="entry name" value="PCMT"/>
</dbReference>
<dbReference type="InterPro" id="IPR029063">
    <property type="entry name" value="SAM-dependent_MTases_sf"/>
</dbReference>
<dbReference type="NCBIfam" id="TIGR00080">
    <property type="entry name" value="pimt"/>
    <property type="match status" value="1"/>
</dbReference>
<dbReference type="NCBIfam" id="NF001453">
    <property type="entry name" value="PRK00312.1"/>
    <property type="match status" value="1"/>
</dbReference>
<dbReference type="PANTHER" id="PTHR11579">
    <property type="entry name" value="PROTEIN-L-ISOASPARTATE O-METHYLTRANSFERASE"/>
    <property type="match status" value="1"/>
</dbReference>
<dbReference type="PANTHER" id="PTHR11579:SF0">
    <property type="entry name" value="PROTEIN-L-ISOASPARTATE(D-ASPARTATE) O-METHYLTRANSFERASE"/>
    <property type="match status" value="1"/>
</dbReference>
<dbReference type="Pfam" id="PF01135">
    <property type="entry name" value="PCMT"/>
    <property type="match status" value="1"/>
</dbReference>
<dbReference type="SUPFAM" id="SSF53335">
    <property type="entry name" value="S-adenosyl-L-methionine-dependent methyltransferases"/>
    <property type="match status" value="1"/>
</dbReference>
<dbReference type="PROSITE" id="PS01279">
    <property type="entry name" value="PCMT"/>
    <property type="match status" value="1"/>
</dbReference>
<protein>
    <recommendedName>
        <fullName evidence="1">Protein-L-isoaspartate O-methyltransferase</fullName>
        <ecNumber evidence="1">2.1.1.77</ecNumber>
    </recommendedName>
    <alternativeName>
        <fullName evidence="1">L-isoaspartyl protein carboxyl methyltransferase</fullName>
    </alternativeName>
    <alternativeName>
        <fullName evidence="1">Protein L-isoaspartyl methyltransferase</fullName>
    </alternativeName>
    <alternativeName>
        <fullName evidence="1">Protein-beta-aspartate methyltransferase</fullName>
        <shortName evidence="1">PIMT</shortName>
    </alternativeName>
</protein>
<reference key="1">
    <citation type="journal article" date="2009" name="BMC Genomics">
        <title>Metabolic analysis of the soil microbe Dechloromonas aromatica str. RCB: indications of a surprisingly complex life-style and cryptic anaerobic pathways for aromatic degradation.</title>
        <authorList>
            <person name="Salinero K.K."/>
            <person name="Keller K."/>
            <person name="Feil W.S."/>
            <person name="Feil H."/>
            <person name="Trong S."/>
            <person name="Di Bartolo G."/>
            <person name="Lapidus A."/>
        </authorList>
    </citation>
    <scope>NUCLEOTIDE SEQUENCE [LARGE SCALE GENOMIC DNA]</scope>
    <source>
        <strain>RCB</strain>
    </source>
</reference>
<evidence type="ECO:0000255" key="1">
    <source>
        <dbReference type="HAMAP-Rule" id="MF_00090"/>
    </source>
</evidence>
<proteinExistence type="inferred from homology"/>
<organism>
    <name type="scientific">Dechloromonas aromatica (strain RCB)</name>
    <dbReference type="NCBI Taxonomy" id="159087"/>
    <lineage>
        <taxon>Bacteria</taxon>
        <taxon>Pseudomonadati</taxon>
        <taxon>Pseudomonadota</taxon>
        <taxon>Betaproteobacteria</taxon>
        <taxon>Rhodocyclales</taxon>
        <taxon>Azonexaceae</taxon>
        <taxon>Dechloromonas</taxon>
    </lineage>
</organism>
<feature type="chain" id="PRO_0000351850" description="Protein-L-isoaspartate O-methyltransferase">
    <location>
        <begin position="1"/>
        <end position="216"/>
    </location>
</feature>
<feature type="active site" evidence="1">
    <location>
        <position position="66"/>
    </location>
</feature>
<keyword id="KW-0963">Cytoplasm</keyword>
<keyword id="KW-0489">Methyltransferase</keyword>
<keyword id="KW-0949">S-adenosyl-L-methionine</keyword>
<keyword id="KW-0808">Transferase</keyword>
<sequence length="216" mass="23316">MLHGIGMTSQRTRARMIERLREKGIRNEAVLKAMAAVPRHVFVEEALASRAYEDTALPLGMGQTISQPFVVARMIELLLNGRSSLGKTLEVGAGCGYQAAVLAQLTKDVYAVERLGPLLEKAKANMRILQQFNVRLKHADGQLGLPEAGPFDSIIVAAAGSHVPPALLEQLAPGGRLVLPVGAGEQYLSFIEHTPQGYVETRLDAVRFVPLLSGTQ</sequence>
<accession>Q47D25</accession>